<gene>
    <name evidence="1" type="primary">glgB</name>
    <name type="ordered locus">Nwi_1207</name>
</gene>
<reference key="1">
    <citation type="journal article" date="2006" name="Appl. Environ. Microbiol.">
        <title>Genome sequence of the chemolithoautotrophic nitrite-oxidizing bacterium Nitrobacter winogradskyi Nb-255.</title>
        <authorList>
            <person name="Starkenburg S.R."/>
            <person name="Chain P.S.G."/>
            <person name="Sayavedra-Soto L.A."/>
            <person name="Hauser L."/>
            <person name="Land M.L."/>
            <person name="Larimer F.W."/>
            <person name="Malfatti S.A."/>
            <person name="Klotz M.G."/>
            <person name="Bottomley P.J."/>
            <person name="Arp D.J."/>
            <person name="Hickey W.J."/>
        </authorList>
    </citation>
    <scope>NUCLEOTIDE SEQUENCE [LARGE SCALE GENOMIC DNA]</scope>
    <source>
        <strain>ATCC 25391 / DSM 10237 / CIP 104748 / NCIMB 11846 / Nb-255</strain>
    </source>
</reference>
<proteinExistence type="inferred from homology"/>
<comment type="function">
    <text evidence="1">Catalyzes the formation of the alpha-1,6-glucosidic linkages in glycogen by scission of a 1,4-alpha-linked oligosaccharide from growing alpha-1,4-glucan chains and the subsequent attachment of the oligosaccharide to the alpha-1,6 position.</text>
</comment>
<comment type="catalytic activity">
    <reaction evidence="1">
        <text>Transfers a segment of a (1-&gt;4)-alpha-D-glucan chain to a primary hydroxy group in a similar glucan chain.</text>
        <dbReference type="EC" id="2.4.1.18"/>
    </reaction>
</comment>
<comment type="pathway">
    <text evidence="1">Glycan biosynthesis; glycogen biosynthesis.</text>
</comment>
<comment type="subunit">
    <text evidence="1">Monomer.</text>
</comment>
<comment type="similarity">
    <text evidence="1">Belongs to the glycosyl hydrolase 13 family. GlgB subfamily.</text>
</comment>
<sequence>MTELSSEARAIVEGRHSDPFHYLGCHRETDRKVVRVYLPDASEVRLIDETGEEIILTRIHDAGLFLGDLPDRAERYRLRARYGADLVELEDPYRFPPILDDFDLYLLGEGTHQRIYDKLGAHPMAMEGVDGAGFVVLAPNARAVAVVGDFNFWDRRRHPMRVRGNGYWELFIPGARAGDRYKFAITAQDGSLLPLKSDPMAFAAEVRPNTASIIFDQARLPRPTPLAATINARGVPISIYEVHLGSWRRSDGNRWLSYRELAETLPDYVRELGFTHIELMPVNEHPFDGSWGYQPTGLYAPTSRFGSPEDFAHLIDACHREGLGLLLDWVPGHFPDDPHGLGRFDGTSLYEHANPLQGRHLDWDTLIYNYGRTEVVNFLVANALFWLDRYGIDGLRVDAVASMLYLDYSRPEGGWIPNKHGGRENLEAIEFLRRFNREVFGRFPNATTVAEESTAWPQVSRPIEFGGLGFGYKWNMGWMHDTLSYFEKDPIHRKHHHDQILFGLHYAFSENFILPLSHDEVVHGKRSILGRMPGDDWQRFANLRAYYAFMFGHPGKKLMFMGAEFGQEREWNHDHALDWHLLDQARHQGVQAVVRDLNKLYREVPALHEFDCDPAGFEWIVANDADHSVFAWMRKGASGRARCLVIANLTPTIHRDYRVRVPFTGRWREALNTDSAHYGGSNVGNDGAIETSGEIIPELVLTLPPLGVIFLVPEAA</sequence>
<organism>
    <name type="scientific">Nitrobacter winogradskyi (strain ATCC 25391 / DSM 10237 / CIP 104748 / NCIMB 11846 / Nb-255)</name>
    <dbReference type="NCBI Taxonomy" id="323098"/>
    <lineage>
        <taxon>Bacteria</taxon>
        <taxon>Pseudomonadati</taxon>
        <taxon>Pseudomonadota</taxon>
        <taxon>Alphaproteobacteria</taxon>
        <taxon>Hyphomicrobiales</taxon>
        <taxon>Nitrobacteraceae</taxon>
        <taxon>Nitrobacter</taxon>
    </lineage>
</organism>
<dbReference type="EC" id="2.4.1.18" evidence="1"/>
<dbReference type="EMBL" id="CP000115">
    <property type="protein sequence ID" value="ABA04469.1"/>
    <property type="molecule type" value="Genomic_DNA"/>
</dbReference>
<dbReference type="RefSeq" id="WP_011314498.1">
    <property type="nucleotide sequence ID" value="NC_007406.1"/>
</dbReference>
<dbReference type="SMR" id="Q3STC2"/>
<dbReference type="STRING" id="323098.Nwi_1207"/>
<dbReference type="CAZy" id="CBM48">
    <property type="family name" value="Carbohydrate-Binding Module Family 48"/>
</dbReference>
<dbReference type="CAZy" id="GH13">
    <property type="family name" value="Glycoside Hydrolase Family 13"/>
</dbReference>
<dbReference type="KEGG" id="nwi:Nwi_1207"/>
<dbReference type="eggNOG" id="COG0296">
    <property type="taxonomic scope" value="Bacteria"/>
</dbReference>
<dbReference type="HOGENOM" id="CLU_004245_3_2_5"/>
<dbReference type="OrthoDB" id="9800174at2"/>
<dbReference type="UniPathway" id="UPA00164"/>
<dbReference type="Proteomes" id="UP000002531">
    <property type="component" value="Chromosome"/>
</dbReference>
<dbReference type="GO" id="GO:0005829">
    <property type="term" value="C:cytosol"/>
    <property type="evidence" value="ECO:0007669"/>
    <property type="project" value="TreeGrafter"/>
</dbReference>
<dbReference type="GO" id="GO:0003844">
    <property type="term" value="F:1,4-alpha-glucan branching enzyme activity"/>
    <property type="evidence" value="ECO:0007669"/>
    <property type="project" value="UniProtKB-UniRule"/>
</dbReference>
<dbReference type="GO" id="GO:0043169">
    <property type="term" value="F:cation binding"/>
    <property type="evidence" value="ECO:0007669"/>
    <property type="project" value="InterPro"/>
</dbReference>
<dbReference type="GO" id="GO:0004553">
    <property type="term" value="F:hydrolase activity, hydrolyzing O-glycosyl compounds"/>
    <property type="evidence" value="ECO:0007669"/>
    <property type="project" value="InterPro"/>
</dbReference>
<dbReference type="GO" id="GO:0005978">
    <property type="term" value="P:glycogen biosynthetic process"/>
    <property type="evidence" value="ECO:0007669"/>
    <property type="project" value="UniProtKB-UniRule"/>
</dbReference>
<dbReference type="CDD" id="cd11322">
    <property type="entry name" value="AmyAc_Glg_BE"/>
    <property type="match status" value="1"/>
</dbReference>
<dbReference type="CDD" id="cd02855">
    <property type="entry name" value="E_set_GBE_prok_N"/>
    <property type="match status" value="1"/>
</dbReference>
<dbReference type="FunFam" id="2.60.40.10:FF:000169">
    <property type="entry name" value="1,4-alpha-glucan branching enzyme GlgB"/>
    <property type="match status" value="1"/>
</dbReference>
<dbReference type="FunFam" id="2.60.40.1180:FF:000002">
    <property type="entry name" value="1,4-alpha-glucan branching enzyme GlgB"/>
    <property type="match status" value="1"/>
</dbReference>
<dbReference type="FunFam" id="3.20.20.80:FF:000003">
    <property type="entry name" value="1,4-alpha-glucan branching enzyme GlgB"/>
    <property type="match status" value="1"/>
</dbReference>
<dbReference type="Gene3D" id="3.20.20.80">
    <property type="entry name" value="Glycosidases"/>
    <property type="match status" value="1"/>
</dbReference>
<dbReference type="Gene3D" id="2.60.40.1180">
    <property type="entry name" value="Golgi alpha-mannosidase II"/>
    <property type="match status" value="1"/>
</dbReference>
<dbReference type="Gene3D" id="2.60.40.10">
    <property type="entry name" value="Immunoglobulins"/>
    <property type="match status" value="2"/>
</dbReference>
<dbReference type="HAMAP" id="MF_00685">
    <property type="entry name" value="GlgB"/>
    <property type="match status" value="1"/>
</dbReference>
<dbReference type="InterPro" id="IPR006048">
    <property type="entry name" value="A-amylase/branching_C"/>
</dbReference>
<dbReference type="InterPro" id="IPR037439">
    <property type="entry name" value="Branching_enzy"/>
</dbReference>
<dbReference type="InterPro" id="IPR006407">
    <property type="entry name" value="GlgB"/>
</dbReference>
<dbReference type="InterPro" id="IPR054169">
    <property type="entry name" value="GlgB_N"/>
</dbReference>
<dbReference type="InterPro" id="IPR044143">
    <property type="entry name" value="GlgB_N_E_set_prok"/>
</dbReference>
<dbReference type="InterPro" id="IPR006047">
    <property type="entry name" value="Glyco_hydro_13_cat_dom"/>
</dbReference>
<dbReference type="InterPro" id="IPR004193">
    <property type="entry name" value="Glyco_hydro_13_N"/>
</dbReference>
<dbReference type="InterPro" id="IPR013780">
    <property type="entry name" value="Glyco_hydro_b"/>
</dbReference>
<dbReference type="InterPro" id="IPR017853">
    <property type="entry name" value="Glycoside_hydrolase_SF"/>
</dbReference>
<dbReference type="InterPro" id="IPR013783">
    <property type="entry name" value="Ig-like_fold"/>
</dbReference>
<dbReference type="InterPro" id="IPR014756">
    <property type="entry name" value="Ig_E-set"/>
</dbReference>
<dbReference type="NCBIfam" id="TIGR01515">
    <property type="entry name" value="branching_enzym"/>
    <property type="match status" value="1"/>
</dbReference>
<dbReference type="NCBIfam" id="NF003811">
    <property type="entry name" value="PRK05402.1"/>
    <property type="match status" value="1"/>
</dbReference>
<dbReference type="NCBIfam" id="NF008967">
    <property type="entry name" value="PRK12313.1"/>
    <property type="match status" value="1"/>
</dbReference>
<dbReference type="PANTHER" id="PTHR43651">
    <property type="entry name" value="1,4-ALPHA-GLUCAN-BRANCHING ENZYME"/>
    <property type="match status" value="1"/>
</dbReference>
<dbReference type="PANTHER" id="PTHR43651:SF3">
    <property type="entry name" value="1,4-ALPHA-GLUCAN-BRANCHING ENZYME"/>
    <property type="match status" value="1"/>
</dbReference>
<dbReference type="Pfam" id="PF00128">
    <property type="entry name" value="Alpha-amylase"/>
    <property type="match status" value="2"/>
</dbReference>
<dbReference type="Pfam" id="PF02806">
    <property type="entry name" value="Alpha-amylase_C"/>
    <property type="match status" value="1"/>
</dbReference>
<dbReference type="Pfam" id="PF02922">
    <property type="entry name" value="CBM_48"/>
    <property type="match status" value="1"/>
</dbReference>
<dbReference type="Pfam" id="PF22019">
    <property type="entry name" value="GlgB_N"/>
    <property type="match status" value="1"/>
</dbReference>
<dbReference type="PIRSF" id="PIRSF000463">
    <property type="entry name" value="GlgB"/>
    <property type="match status" value="1"/>
</dbReference>
<dbReference type="SMART" id="SM00642">
    <property type="entry name" value="Aamy"/>
    <property type="match status" value="1"/>
</dbReference>
<dbReference type="SUPFAM" id="SSF51445">
    <property type="entry name" value="(Trans)glycosidases"/>
    <property type="match status" value="1"/>
</dbReference>
<dbReference type="SUPFAM" id="SSF81296">
    <property type="entry name" value="E set domains"/>
    <property type="match status" value="2"/>
</dbReference>
<dbReference type="SUPFAM" id="SSF51011">
    <property type="entry name" value="Glycosyl hydrolase domain"/>
    <property type="match status" value="1"/>
</dbReference>
<evidence type="ECO:0000255" key="1">
    <source>
        <dbReference type="HAMAP-Rule" id="MF_00685"/>
    </source>
</evidence>
<accession>Q3STC2</accession>
<feature type="chain" id="PRO_0000260670" description="1,4-alpha-glucan branching enzyme GlgB">
    <location>
        <begin position="1"/>
        <end position="716"/>
    </location>
</feature>
<feature type="active site" description="Nucleophile" evidence="1">
    <location>
        <position position="398"/>
    </location>
</feature>
<feature type="active site" description="Proton donor" evidence="1">
    <location>
        <position position="451"/>
    </location>
</feature>
<protein>
    <recommendedName>
        <fullName evidence="1">1,4-alpha-glucan branching enzyme GlgB</fullName>
        <ecNumber evidence="1">2.4.1.18</ecNumber>
    </recommendedName>
    <alternativeName>
        <fullName evidence="1">1,4-alpha-D-glucan:1,4-alpha-D-glucan 6-glucosyl-transferase</fullName>
    </alternativeName>
    <alternativeName>
        <fullName evidence="1">Alpha-(1-&gt;4)-glucan branching enzyme</fullName>
    </alternativeName>
    <alternativeName>
        <fullName evidence="1">Glycogen branching enzyme</fullName>
        <shortName evidence="1">BE</shortName>
    </alternativeName>
</protein>
<name>GLGB_NITWN</name>
<keyword id="KW-0119">Carbohydrate metabolism</keyword>
<keyword id="KW-0320">Glycogen biosynthesis</keyword>
<keyword id="KW-0321">Glycogen metabolism</keyword>
<keyword id="KW-0328">Glycosyltransferase</keyword>
<keyword id="KW-1185">Reference proteome</keyword>
<keyword id="KW-0808">Transferase</keyword>